<feature type="chain" id="PRO_1000026070" description="ATP-dependent Clp protease proteolytic subunit">
    <location>
        <begin position="1"/>
        <end position="217"/>
    </location>
</feature>
<feature type="active site" description="Nucleophile" evidence="1">
    <location>
        <position position="121"/>
    </location>
</feature>
<feature type="active site" evidence="1">
    <location>
        <position position="146"/>
    </location>
</feature>
<sequence>MINRAQLLDTLASQAPRDFEAQALGLVPIVVETSGRGERSYDIYSRLLKERIVFMVGEVNDQTANLVVAQLLFLESENPDKDISLYINSPGGSVSAGMAIYDTMQFVKPDVSTLCMGLAASMGAFLLASGAKGKRYALPNARVMIHQPLGGARGQASDIEIQAREILYLRDRLNHLLAHHTGQDVERIARDTDRDNFMSSEDAKAYGLIDHVSTKRP</sequence>
<evidence type="ECO:0000255" key="1">
    <source>
        <dbReference type="HAMAP-Rule" id="MF_00444"/>
    </source>
</evidence>
<proteinExistence type="inferred from homology"/>
<keyword id="KW-0963">Cytoplasm</keyword>
<keyword id="KW-0378">Hydrolase</keyword>
<keyword id="KW-0645">Protease</keyword>
<keyword id="KW-0720">Serine protease</keyword>
<protein>
    <recommendedName>
        <fullName evidence="1">ATP-dependent Clp protease proteolytic subunit</fullName>
        <ecNumber evidence="1">3.4.21.92</ecNumber>
    </recommendedName>
    <alternativeName>
        <fullName evidence="1">Endopeptidase Clp</fullName>
    </alternativeName>
</protein>
<gene>
    <name evidence="1" type="primary">clpP</name>
    <name type="ordered locus">BMA10247_1232</name>
</gene>
<comment type="function">
    <text evidence="1">Cleaves peptides in various proteins in a process that requires ATP hydrolysis. Has a chymotrypsin-like activity. Plays a major role in the degradation of misfolded proteins.</text>
</comment>
<comment type="catalytic activity">
    <reaction evidence="1">
        <text>Hydrolysis of proteins to small peptides in the presence of ATP and magnesium. alpha-casein is the usual test substrate. In the absence of ATP, only oligopeptides shorter than five residues are hydrolyzed (such as succinyl-Leu-Tyr-|-NHMec, and Leu-Tyr-Leu-|-Tyr-Trp, in which cleavage of the -Tyr-|-Leu- and -Tyr-|-Trp bonds also occurs).</text>
        <dbReference type="EC" id="3.4.21.92"/>
    </reaction>
</comment>
<comment type="subunit">
    <text evidence="1">Fourteen ClpP subunits assemble into 2 heptameric rings which stack back to back to give a disk-like structure with a central cavity, resembling the structure of eukaryotic proteasomes.</text>
</comment>
<comment type="subcellular location">
    <subcellularLocation>
        <location evidence="1">Cytoplasm</location>
    </subcellularLocation>
</comment>
<comment type="similarity">
    <text evidence="1">Belongs to the peptidase S14 family.</text>
</comment>
<reference key="1">
    <citation type="journal article" date="2010" name="Genome Biol. Evol.">
        <title>Continuing evolution of Burkholderia mallei through genome reduction and large-scale rearrangements.</title>
        <authorList>
            <person name="Losada L."/>
            <person name="Ronning C.M."/>
            <person name="DeShazer D."/>
            <person name="Woods D."/>
            <person name="Fedorova N."/>
            <person name="Kim H.S."/>
            <person name="Shabalina S.A."/>
            <person name="Pearson T.R."/>
            <person name="Brinkac L."/>
            <person name="Tan P."/>
            <person name="Nandi T."/>
            <person name="Crabtree J."/>
            <person name="Badger J."/>
            <person name="Beckstrom-Sternberg S."/>
            <person name="Saqib M."/>
            <person name="Schutzer S.E."/>
            <person name="Keim P."/>
            <person name="Nierman W.C."/>
        </authorList>
    </citation>
    <scope>NUCLEOTIDE SEQUENCE [LARGE SCALE GENOMIC DNA]</scope>
    <source>
        <strain>NCTC 10247</strain>
    </source>
</reference>
<organism>
    <name type="scientific">Burkholderia mallei (strain NCTC 10247)</name>
    <dbReference type="NCBI Taxonomy" id="320389"/>
    <lineage>
        <taxon>Bacteria</taxon>
        <taxon>Pseudomonadati</taxon>
        <taxon>Pseudomonadota</taxon>
        <taxon>Betaproteobacteria</taxon>
        <taxon>Burkholderiales</taxon>
        <taxon>Burkholderiaceae</taxon>
        <taxon>Burkholderia</taxon>
        <taxon>pseudomallei group</taxon>
    </lineage>
</organism>
<dbReference type="EC" id="3.4.21.92" evidence="1"/>
<dbReference type="EMBL" id="CP000548">
    <property type="protein sequence ID" value="ABO06220.1"/>
    <property type="molecule type" value="Genomic_DNA"/>
</dbReference>
<dbReference type="RefSeq" id="WP_004193408.1">
    <property type="nucleotide sequence ID" value="NZ_CP007802.1"/>
</dbReference>
<dbReference type="SMR" id="A3MKJ8"/>
<dbReference type="MEROPS" id="S14.001"/>
<dbReference type="GeneID" id="92979196"/>
<dbReference type="KEGG" id="bmaz:BM44_1881"/>
<dbReference type="KEGG" id="bmn:BMA10247_1232"/>
<dbReference type="PATRIC" id="fig|320389.8.peg.2112"/>
<dbReference type="GO" id="GO:0005737">
    <property type="term" value="C:cytoplasm"/>
    <property type="evidence" value="ECO:0007669"/>
    <property type="project" value="UniProtKB-SubCell"/>
</dbReference>
<dbReference type="GO" id="GO:0009368">
    <property type="term" value="C:endopeptidase Clp complex"/>
    <property type="evidence" value="ECO:0007669"/>
    <property type="project" value="TreeGrafter"/>
</dbReference>
<dbReference type="GO" id="GO:0004176">
    <property type="term" value="F:ATP-dependent peptidase activity"/>
    <property type="evidence" value="ECO:0007669"/>
    <property type="project" value="InterPro"/>
</dbReference>
<dbReference type="GO" id="GO:0051117">
    <property type="term" value="F:ATPase binding"/>
    <property type="evidence" value="ECO:0007669"/>
    <property type="project" value="TreeGrafter"/>
</dbReference>
<dbReference type="GO" id="GO:0004252">
    <property type="term" value="F:serine-type endopeptidase activity"/>
    <property type="evidence" value="ECO:0007669"/>
    <property type="project" value="UniProtKB-UniRule"/>
</dbReference>
<dbReference type="GO" id="GO:0006515">
    <property type="term" value="P:protein quality control for misfolded or incompletely synthesized proteins"/>
    <property type="evidence" value="ECO:0007669"/>
    <property type="project" value="TreeGrafter"/>
</dbReference>
<dbReference type="CDD" id="cd07017">
    <property type="entry name" value="S14_ClpP_2"/>
    <property type="match status" value="1"/>
</dbReference>
<dbReference type="FunFam" id="3.90.226.10:FF:000001">
    <property type="entry name" value="ATP-dependent Clp protease proteolytic subunit"/>
    <property type="match status" value="1"/>
</dbReference>
<dbReference type="Gene3D" id="3.90.226.10">
    <property type="entry name" value="2-enoyl-CoA Hydratase, Chain A, domain 1"/>
    <property type="match status" value="1"/>
</dbReference>
<dbReference type="HAMAP" id="MF_00444">
    <property type="entry name" value="ClpP"/>
    <property type="match status" value="1"/>
</dbReference>
<dbReference type="InterPro" id="IPR001907">
    <property type="entry name" value="ClpP"/>
</dbReference>
<dbReference type="InterPro" id="IPR029045">
    <property type="entry name" value="ClpP/crotonase-like_dom_sf"/>
</dbReference>
<dbReference type="InterPro" id="IPR023562">
    <property type="entry name" value="ClpP/TepA"/>
</dbReference>
<dbReference type="InterPro" id="IPR033135">
    <property type="entry name" value="ClpP_His_AS"/>
</dbReference>
<dbReference type="InterPro" id="IPR018215">
    <property type="entry name" value="ClpP_Ser_AS"/>
</dbReference>
<dbReference type="NCBIfam" id="TIGR00493">
    <property type="entry name" value="clpP"/>
    <property type="match status" value="1"/>
</dbReference>
<dbReference type="NCBIfam" id="NF001368">
    <property type="entry name" value="PRK00277.1"/>
    <property type="match status" value="1"/>
</dbReference>
<dbReference type="NCBIfam" id="NF009205">
    <property type="entry name" value="PRK12553.1"/>
    <property type="match status" value="1"/>
</dbReference>
<dbReference type="PANTHER" id="PTHR10381">
    <property type="entry name" value="ATP-DEPENDENT CLP PROTEASE PROTEOLYTIC SUBUNIT"/>
    <property type="match status" value="1"/>
</dbReference>
<dbReference type="PANTHER" id="PTHR10381:SF70">
    <property type="entry name" value="ATP-DEPENDENT CLP PROTEASE PROTEOLYTIC SUBUNIT"/>
    <property type="match status" value="1"/>
</dbReference>
<dbReference type="Pfam" id="PF00574">
    <property type="entry name" value="CLP_protease"/>
    <property type="match status" value="1"/>
</dbReference>
<dbReference type="PRINTS" id="PR00127">
    <property type="entry name" value="CLPPROTEASEP"/>
</dbReference>
<dbReference type="SUPFAM" id="SSF52096">
    <property type="entry name" value="ClpP/crotonase"/>
    <property type="match status" value="1"/>
</dbReference>
<dbReference type="PROSITE" id="PS00382">
    <property type="entry name" value="CLP_PROTEASE_HIS"/>
    <property type="match status" value="1"/>
</dbReference>
<dbReference type="PROSITE" id="PS00381">
    <property type="entry name" value="CLP_PROTEASE_SER"/>
    <property type="match status" value="1"/>
</dbReference>
<accession>A3MKJ8</accession>
<name>CLPP_BURM7</name>